<keyword id="KW-0131">Cell cycle</keyword>
<keyword id="KW-0132">Cell division</keyword>
<keyword id="KW-0137">Centromere</keyword>
<keyword id="KW-0158">Chromosome</keyword>
<keyword id="KW-0159">Chromosome partition</keyword>
<keyword id="KW-0175">Coiled coil</keyword>
<keyword id="KW-0963">Cytoplasm</keyword>
<keyword id="KW-0206">Cytoskeleton</keyword>
<keyword id="KW-0995">Kinetochore</keyword>
<keyword id="KW-0493">Microtubule</keyword>
<keyword id="KW-0498">Mitosis</keyword>
<keyword id="KW-0539">Nucleus</keyword>
<keyword id="KW-1185">Reference proteome</keyword>
<sequence>MSQRPNTPQRDRPTEYRLSLSSNASSRRSSLGNNGRDQHASNQTMIEKYVLPQLQELSDSMVTLDGNMTHMNFIHESIADLNEALSALLYGLMCNSWCVDFPNISHDTPHELKLIQRLEELKQERQALQAKLKPKELTKGSILPLSRQPLSRGSQMLYRDENVPGSTASSNVNIDINDDEDNTAASFVSNPTTFKPQMISSVGASTDFMGKQTVGSASSKLRRRSILHQIRNNAAIGTIPNTLTGITPGERKRSLAVSAKRIPILAGSSTTAGSASSANRESTNTEPALPNRVVRTRQRTYNPKNLASRPPFR</sequence>
<comment type="function">
    <text evidence="1">Component of the DASH complex that connects microtubules with kinetochores and couples microtubule depolymerisation to chromosome movement; it is involved in retrieving kinetochores to the spindle poles before their re-orientation on the spindle in early mitosis and allows microtubule depolymerization to pull chromosomes apart and resist detachment during anaphase. Kinetochores, consisting of a centromere-associated inner segment and a microtubule-contacting outer segment, play a crucial role in chromosome segregation by mediating the physical connection between centromeric DNA and microtubules. Kinetochores also serve as an input point for the spindle assembly checkpoint, which delays anaphase until all chromosomes have bioriented on the mitotic spindle.</text>
</comment>
<comment type="subunit">
    <text evidence="1 2">Component of the DASH complex consisting of ASK1, DAD1, DAD2, DAD3, DAD4, DAM1, DUO1, HSK3, SPC19 and SPC34, with a stoichiometry of one copy of each subunit per complex. Multiple DASH complexes oligomerize to form a ring that encircles spindle microtubules and organizes the rod-like NDC80 complexes of the outer kinetochore. DASH complex oligomerization strengthens microtubule attachments. Within the complex, DAM1 and DUO1 may form the microtubule connections (By similarity). On cytoplasmic microtubules, DASH complexes appear to form patches instead of rings (By similarity). Interacts with the outer kinetochore component NDC80; the interaction is direct (By similarity).</text>
</comment>
<comment type="subcellular location">
    <subcellularLocation>
        <location evidence="1">Nucleus</location>
    </subcellularLocation>
    <subcellularLocation>
        <location evidence="1">Cytoplasm</location>
        <location evidence="1">Cytoskeleton</location>
        <location evidence="1">Spindle</location>
    </subcellularLocation>
    <subcellularLocation>
        <location evidence="1">Chromosome</location>
        <location evidence="1">Centromere</location>
        <location evidence="1">Kinetochore</location>
    </subcellularLocation>
</comment>
<comment type="similarity">
    <text evidence="5">Belongs to the DASH complex DAM1 family.</text>
</comment>
<gene>
    <name type="primary">DAM1</name>
    <name type="ordered locus">KLLA0B11429g</name>
</gene>
<reference key="1">
    <citation type="journal article" date="2004" name="Nature">
        <title>Genome evolution in yeasts.</title>
        <authorList>
            <person name="Dujon B."/>
            <person name="Sherman D."/>
            <person name="Fischer G."/>
            <person name="Durrens P."/>
            <person name="Casaregola S."/>
            <person name="Lafontaine I."/>
            <person name="de Montigny J."/>
            <person name="Marck C."/>
            <person name="Neuveglise C."/>
            <person name="Talla E."/>
            <person name="Goffard N."/>
            <person name="Frangeul L."/>
            <person name="Aigle M."/>
            <person name="Anthouard V."/>
            <person name="Babour A."/>
            <person name="Barbe V."/>
            <person name="Barnay S."/>
            <person name="Blanchin S."/>
            <person name="Beckerich J.-M."/>
            <person name="Beyne E."/>
            <person name="Bleykasten C."/>
            <person name="Boisrame A."/>
            <person name="Boyer J."/>
            <person name="Cattolico L."/>
            <person name="Confanioleri F."/>
            <person name="de Daruvar A."/>
            <person name="Despons L."/>
            <person name="Fabre E."/>
            <person name="Fairhead C."/>
            <person name="Ferry-Dumazet H."/>
            <person name="Groppi A."/>
            <person name="Hantraye F."/>
            <person name="Hennequin C."/>
            <person name="Jauniaux N."/>
            <person name="Joyet P."/>
            <person name="Kachouri R."/>
            <person name="Kerrest A."/>
            <person name="Koszul R."/>
            <person name="Lemaire M."/>
            <person name="Lesur I."/>
            <person name="Ma L."/>
            <person name="Muller H."/>
            <person name="Nicaud J.-M."/>
            <person name="Nikolski M."/>
            <person name="Oztas S."/>
            <person name="Ozier-Kalogeropoulos O."/>
            <person name="Pellenz S."/>
            <person name="Potier S."/>
            <person name="Richard G.-F."/>
            <person name="Straub M.-L."/>
            <person name="Suleau A."/>
            <person name="Swennen D."/>
            <person name="Tekaia F."/>
            <person name="Wesolowski-Louvel M."/>
            <person name="Westhof E."/>
            <person name="Wirth B."/>
            <person name="Zeniou-Meyer M."/>
            <person name="Zivanovic Y."/>
            <person name="Bolotin-Fukuhara M."/>
            <person name="Thierry A."/>
            <person name="Bouchier C."/>
            <person name="Caudron B."/>
            <person name="Scarpelli C."/>
            <person name="Gaillardin C."/>
            <person name="Weissenbach J."/>
            <person name="Wincker P."/>
            <person name="Souciet J.-L."/>
        </authorList>
    </citation>
    <scope>NUCLEOTIDE SEQUENCE [LARGE SCALE GENOMIC DNA]</scope>
    <source>
        <strain>ATCC 8585 / CBS 2359 / DSM 70799 / NBRC 1267 / NRRL Y-1140 / WM37</strain>
    </source>
</reference>
<proteinExistence type="inferred from homology"/>
<accession>Q6CVK1</accession>
<evidence type="ECO:0000250" key="1">
    <source>
        <dbReference type="UniProtKB" id="P53267"/>
    </source>
</evidence>
<evidence type="ECO:0000250" key="2">
    <source>
        <dbReference type="UniProtKB" id="Q9HDZ6"/>
    </source>
</evidence>
<evidence type="ECO:0000255" key="3"/>
<evidence type="ECO:0000256" key="4">
    <source>
        <dbReference type="SAM" id="MobiDB-lite"/>
    </source>
</evidence>
<evidence type="ECO:0000305" key="5"/>
<organism>
    <name type="scientific">Kluyveromyces lactis (strain ATCC 8585 / CBS 2359 / DSM 70799 / NBRC 1267 / NRRL Y-1140 / WM37)</name>
    <name type="common">Yeast</name>
    <name type="synonym">Candida sphaerica</name>
    <dbReference type="NCBI Taxonomy" id="284590"/>
    <lineage>
        <taxon>Eukaryota</taxon>
        <taxon>Fungi</taxon>
        <taxon>Dikarya</taxon>
        <taxon>Ascomycota</taxon>
        <taxon>Saccharomycotina</taxon>
        <taxon>Saccharomycetes</taxon>
        <taxon>Saccharomycetales</taxon>
        <taxon>Saccharomycetaceae</taxon>
        <taxon>Kluyveromyces</taxon>
    </lineage>
</organism>
<name>DAM1_KLULA</name>
<feature type="chain" id="PRO_0000127660" description="DASH complex subunit DAM1">
    <location>
        <begin position="1"/>
        <end position="313"/>
    </location>
</feature>
<feature type="region of interest" description="Disordered" evidence="4">
    <location>
        <begin position="1"/>
        <end position="39"/>
    </location>
</feature>
<feature type="region of interest" description="Disordered" evidence="4">
    <location>
        <begin position="268"/>
        <end position="313"/>
    </location>
</feature>
<feature type="coiled-coil region" evidence="3">
    <location>
        <begin position="110"/>
        <end position="139"/>
    </location>
</feature>
<feature type="compositionally biased region" description="Low complexity" evidence="4">
    <location>
        <begin position="17"/>
        <end position="35"/>
    </location>
</feature>
<feature type="compositionally biased region" description="Low complexity" evidence="4">
    <location>
        <begin position="268"/>
        <end position="278"/>
    </location>
</feature>
<dbReference type="EMBL" id="CR382122">
    <property type="protein sequence ID" value="CAH02431.1"/>
    <property type="molecule type" value="Genomic_DNA"/>
</dbReference>
<dbReference type="RefSeq" id="XP_452038.1">
    <property type="nucleotide sequence ID" value="XM_452038.1"/>
</dbReference>
<dbReference type="SMR" id="Q6CVK1"/>
<dbReference type="FunCoup" id="Q6CVK1">
    <property type="interactions" value="222"/>
</dbReference>
<dbReference type="STRING" id="284590.Q6CVK1"/>
<dbReference type="PaxDb" id="284590-Q6CVK1"/>
<dbReference type="KEGG" id="kla:KLLA0_B11429g"/>
<dbReference type="eggNOG" id="ENOG502S08R">
    <property type="taxonomic scope" value="Eukaryota"/>
</dbReference>
<dbReference type="HOGENOM" id="CLU_065404_0_0_1"/>
<dbReference type="InParanoid" id="Q6CVK1"/>
<dbReference type="OMA" id="GLMCNSW"/>
<dbReference type="Proteomes" id="UP000000598">
    <property type="component" value="Chromosome B"/>
</dbReference>
<dbReference type="GO" id="GO:0005737">
    <property type="term" value="C:cytoplasm"/>
    <property type="evidence" value="ECO:0007669"/>
    <property type="project" value="UniProtKB-KW"/>
</dbReference>
<dbReference type="GO" id="GO:0042729">
    <property type="term" value="C:DASH complex"/>
    <property type="evidence" value="ECO:0000250"/>
    <property type="project" value="UniProtKB"/>
</dbReference>
<dbReference type="GO" id="GO:1990537">
    <property type="term" value="C:mitotic spindle polar microtubule"/>
    <property type="evidence" value="ECO:0007669"/>
    <property type="project" value="TreeGrafter"/>
</dbReference>
<dbReference type="GO" id="GO:0044732">
    <property type="term" value="C:mitotic spindle pole body"/>
    <property type="evidence" value="ECO:0007669"/>
    <property type="project" value="TreeGrafter"/>
</dbReference>
<dbReference type="GO" id="GO:0008608">
    <property type="term" value="P:attachment of spindle microtubules to kinetochore"/>
    <property type="evidence" value="ECO:0000250"/>
    <property type="project" value="UniProtKB"/>
</dbReference>
<dbReference type="GO" id="GO:0051301">
    <property type="term" value="P:cell division"/>
    <property type="evidence" value="ECO:0007669"/>
    <property type="project" value="UniProtKB-KW"/>
</dbReference>
<dbReference type="GO" id="GO:1990758">
    <property type="term" value="P:mitotic sister chromatid biorientation"/>
    <property type="evidence" value="ECO:0000250"/>
    <property type="project" value="UniProtKB"/>
</dbReference>
<dbReference type="GO" id="GO:1990976">
    <property type="term" value="P:protein transport along microtubule to mitotic spindle pole body"/>
    <property type="evidence" value="ECO:0000250"/>
    <property type="project" value="UniProtKB"/>
</dbReference>
<dbReference type="InterPro" id="IPR013962">
    <property type="entry name" value="DASH_Dam1"/>
</dbReference>
<dbReference type="PANTHER" id="PTHR28113">
    <property type="entry name" value="DASH COMPLEX SUBUNIT DAM1"/>
    <property type="match status" value="1"/>
</dbReference>
<dbReference type="PANTHER" id="PTHR28113:SF1">
    <property type="entry name" value="DASH COMPLEX SUBUNIT DAM1"/>
    <property type="match status" value="1"/>
</dbReference>
<dbReference type="Pfam" id="PF08653">
    <property type="entry name" value="DASH_Dam1"/>
    <property type="match status" value="1"/>
</dbReference>
<protein>
    <recommendedName>
        <fullName>DASH complex subunit DAM1</fullName>
    </recommendedName>
    <alternativeName>
        <fullName>Outer kinetochore protein DAM1</fullName>
    </alternativeName>
</protein>